<comment type="function">
    <text evidence="1">Part of the ABC transporter complex CysAWTP involved in sulfate/thiosulfate import. Responsible for energy coupling to the transport system.</text>
</comment>
<comment type="catalytic activity">
    <reaction evidence="1">
        <text>sulfate(out) + ATP + H2O = sulfate(in) + ADP + phosphate + H(+)</text>
        <dbReference type="Rhea" id="RHEA:10192"/>
        <dbReference type="ChEBI" id="CHEBI:15377"/>
        <dbReference type="ChEBI" id="CHEBI:15378"/>
        <dbReference type="ChEBI" id="CHEBI:16189"/>
        <dbReference type="ChEBI" id="CHEBI:30616"/>
        <dbReference type="ChEBI" id="CHEBI:43474"/>
        <dbReference type="ChEBI" id="CHEBI:456216"/>
        <dbReference type="EC" id="7.3.2.3"/>
    </reaction>
</comment>
<comment type="catalytic activity">
    <reaction evidence="1">
        <text>thiosulfate(out) + ATP + H2O = thiosulfate(in) + ADP + phosphate + H(+)</text>
        <dbReference type="Rhea" id="RHEA:29871"/>
        <dbReference type="ChEBI" id="CHEBI:15377"/>
        <dbReference type="ChEBI" id="CHEBI:15378"/>
        <dbReference type="ChEBI" id="CHEBI:30616"/>
        <dbReference type="ChEBI" id="CHEBI:33542"/>
        <dbReference type="ChEBI" id="CHEBI:43474"/>
        <dbReference type="ChEBI" id="CHEBI:456216"/>
        <dbReference type="EC" id="7.3.2.3"/>
    </reaction>
</comment>
<comment type="subunit">
    <text evidence="1">The complex is composed of two ATP-binding proteins (CysA), two transmembrane proteins (CysT and CysW) and a solute-binding protein (CysP).</text>
</comment>
<comment type="subcellular location">
    <subcellularLocation>
        <location evidence="1">Cell inner membrane</location>
        <topology evidence="1">Peripheral membrane protein</topology>
    </subcellularLocation>
</comment>
<comment type="similarity">
    <text evidence="1">Belongs to the ABC transporter superfamily. Sulfate/tungstate importer (TC 3.A.1.6) family.</text>
</comment>
<gene>
    <name evidence="1" type="primary">cysA</name>
    <name type="ordered locus">ECA3296</name>
</gene>
<dbReference type="EC" id="7.3.2.3" evidence="1"/>
<dbReference type="EMBL" id="BX950851">
    <property type="protein sequence ID" value="CAG76194.1"/>
    <property type="molecule type" value="Genomic_DNA"/>
</dbReference>
<dbReference type="RefSeq" id="WP_011094813.1">
    <property type="nucleotide sequence ID" value="NC_004547.2"/>
</dbReference>
<dbReference type="SMR" id="Q6D201"/>
<dbReference type="STRING" id="218491.ECA3296"/>
<dbReference type="KEGG" id="eca:ECA3296"/>
<dbReference type="eggNOG" id="COG1118">
    <property type="taxonomic scope" value="Bacteria"/>
</dbReference>
<dbReference type="HOGENOM" id="CLU_000604_1_1_6"/>
<dbReference type="OrthoDB" id="9802264at2"/>
<dbReference type="Proteomes" id="UP000007966">
    <property type="component" value="Chromosome"/>
</dbReference>
<dbReference type="GO" id="GO:0043190">
    <property type="term" value="C:ATP-binding cassette (ABC) transporter complex"/>
    <property type="evidence" value="ECO:0007669"/>
    <property type="project" value="InterPro"/>
</dbReference>
<dbReference type="GO" id="GO:0015419">
    <property type="term" value="F:ABC-type sulfate transporter activity"/>
    <property type="evidence" value="ECO:0007669"/>
    <property type="project" value="InterPro"/>
</dbReference>
<dbReference type="GO" id="GO:0102025">
    <property type="term" value="F:ABC-type thiosulfate transporter activity"/>
    <property type="evidence" value="ECO:0007669"/>
    <property type="project" value="RHEA"/>
</dbReference>
<dbReference type="GO" id="GO:0005524">
    <property type="term" value="F:ATP binding"/>
    <property type="evidence" value="ECO:0007669"/>
    <property type="project" value="UniProtKB-KW"/>
</dbReference>
<dbReference type="GO" id="GO:0016887">
    <property type="term" value="F:ATP hydrolysis activity"/>
    <property type="evidence" value="ECO:0007669"/>
    <property type="project" value="InterPro"/>
</dbReference>
<dbReference type="CDD" id="cd03296">
    <property type="entry name" value="ABC_CysA_sulfate_importer"/>
    <property type="match status" value="1"/>
</dbReference>
<dbReference type="FunFam" id="3.40.50.300:FF:000227">
    <property type="entry name" value="Sulfate/thiosulfate import ATP-binding protein CysA"/>
    <property type="match status" value="1"/>
</dbReference>
<dbReference type="Gene3D" id="3.40.50.300">
    <property type="entry name" value="P-loop containing nucleotide triphosphate hydrolases"/>
    <property type="match status" value="1"/>
</dbReference>
<dbReference type="InterPro" id="IPR003593">
    <property type="entry name" value="AAA+_ATPase"/>
</dbReference>
<dbReference type="InterPro" id="IPR050093">
    <property type="entry name" value="ABC_SmlMolc_Importer"/>
</dbReference>
<dbReference type="InterPro" id="IPR003439">
    <property type="entry name" value="ABC_transporter-like_ATP-bd"/>
</dbReference>
<dbReference type="InterPro" id="IPR017871">
    <property type="entry name" value="ABC_transporter-like_CS"/>
</dbReference>
<dbReference type="InterPro" id="IPR008995">
    <property type="entry name" value="Mo/tungstate-bd_C_term_dom"/>
</dbReference>
<dbReference type="InterPro" id="IPR027417">
    <property type="entry name" value="P-loop_NTPase"/>
</dbReference>
<dbReference type="InterPro" id="IPR005666">
    <property type="entry name" value="Sulph_transpt1"/>
</dbReference>
<dbReference type="InterPro" id="IPR024765">
    <property type="entry name" value="TOBE-like"/>
</dbReference>
<dbReference type="NCBIfam" id="TIGR00968">
    <property type="entry name" value="3a0106s01"/>
    <property type="match status" value="1"/>
</dbReference>
<dbReference type="PANTHER" id="PTHR42781">
    <property type="entry name" value="SPERMIDINE/PUTRESCINE IMPORT ATP-BINDING PROTEIN POTA"/>
    <property type="match status" value="1"/>
</dbReference>
<dbReference type="PANTHER" id="PTHR42781:SF4">
    <property type="entry name" value="SPERMIDINE_PUTRESCINE IMPORT ATP-BINDING PROTEIN POTA"/>
    <property type="match status" value="1"/>
</dbReference>
<dbReference type="Pfam" id="PF00005">
    <property type="entry name" value="ABC_tran"/>
    <property type="match status" value="1"/>
</dbReference>
<dbReference type="Pfam" id="PF12857">
    <property type="entry name" value="TOBE_3"/>
    <property type="match status" value="1"/>
</dbReference>
<dbReference type="SMART" id="SM00382">
    <property type="entry name" value="AAA"/>
    <property type="match status" value="1"/>
</dbReference>
<dbReference type="SUPFAM" id="SSF50331">
    <property type="entry name" value="MOP-like"/>
    <property type="match status" value="1"/>
</dbReference>
<dbReference type="SUPFAM" id="SSF52540">
    <property type="entry name" value="P-loop containing nucleoside triphosphate hydrolases"/>
    <property type="match status" value="1"/>
</dbReference>
<dbReference type="PROSITE" id="PS00211">
    <property type="entry name" value="ABC_TRANSPORTER_1"/>
    <property type="match status" value="1"/>
</dbReference>
<dbReference type="PROSITE" id="PS50893">
    <property type="entry name" value="ABC_TRANSPORTER_2"/>
    <property type="match status" value="1"/>
</dbReference>
<dbReference type="PROSITE" id="PS51237">
    <property type="entry name" value="CYSA"/>
    <property type="match status" value="1"/>
</dbReference>
<name>CYSA_PECAS</name>
<accession>Q6D201</accession>
<feature type="chain" id="PRO_0000092268" description="Sulfate/thiosulfate import ATP-binding protein CysA">
    <location>
        <begin position="1"/>
        <end position="330"/>
    </location>
</feature>
<feature type="domain" description="ABC transporter" evidence="1">
    <location>
        <begin position="3"/>
        <end position="237"/>
    </location>
</feature>
<feature type="binding site" evidence="1">
    <location>
        <begin position="35"/>
        <end position="42"/>
    </location>
    <ligand>
        <name>ATP</name>
        <dbReference type="ChEBI" id="CHEBI:30616"/>
    </ligand>
</feature>
<proteinExistence type="inferred from homology"/>
<keyword id="KW-0067">ATP-binding</keyword>
<keyword id="KW-0997">Cell inner membrane</keyword>
<keyword id="KW-1003">Cell membrane</keyword>
<keyword id="KW-0472">Membrane</keyword>
<keyword id="KW-0547">Nucleotide-binding</keyword>
<keyword id="KW-1185">Reference proteome</keyword>
<keyword id="KW-0764">Sulfate transport</keyword>
<keyword id="KW-1278">Translocase</keyword>
<keyword id="KW-0813">Transport</keyword>
<organism>
    <name type="scientific">Pectobacterium atrosepticum (strain SCRI 1043 / ATCC BAA-672)</name>
    <name type="common">Erwinia carotovora subsp. atroseptica</name>
    <dbReference type="NCBI Taxonomy" id="218491"/>
    <lineage>
        <taxon>Bacteria</taxon>
        <taxon>Pseudomonadati</taxon>
        <taxon>Pseudomonadota</taxon>
        <taxon>Gammaproteobacteria</taxon>
        <taxon>Enterobacterales</taxon>
        <taxon>Pectobacteriaceae</taxon>
        <taxon>Pectobacterium</taxon>
    </lineage>
</organism>
<reference key="1">
    <citation type="journal article" date="2004" name="Proc. Natl. Acad. Sci. U.S.A.">
        <title>Genome sequence of the enterobacterial phytopathogen Erwinia carotovora subsp. atroseptica and characterization of virulence factors.</title>
        <authorList>
            <person name="Bell K.S."/>
            <person name="Sebaihia M."/>
            <person name="Pritchard L."/>
            <person name="Holden M.T.G."/>
            <person name="Hyman L.J."/>
            <person name="Holeva M.C."/>
            <person name="Thomson N.R."/>
            <person name="Bentley S.D."/>
            <person name="Churcher L.J.C."/>
            <person name="Mungall K."/>
            <person name="Atkin R."/>
            <person name="Bason N."/>
            <person name="Brooks K."/>
            <person name="Chillingworth T."/>
            <person name="Clark K."/>
            <person name="Doggett J."/>
            <person name="Fraser A."/>
            <person name="Hance Z."/>
            <person name="Hauser H."/>
            <person name="Jagels K."/>
            <person name="Moule S."/>
            <person name="Norbertczak H."/>
            <person name="Ormond D."/>
            <person name="Price C."/>
            <person name="Quail M.A."/>
            <person name="Sanders M."/>
            <person name="Walker D."/>
            <person name="Whitehead S."/>
            <person name="Salmond G.P.C."/>
            <person name="Birch P.R.J."/>
            <person name="Parkhill J."/>
            <person name="Toth I.K."/>
        </authorList>
    </citation>
    <scope>NUCLEOTIDE SEQUENCE [LARGE SCALE GENOMIC DNA]</scope>
    <source>
        <strain>SCRI 1043 / ATCC BAA-672</strain>
    </source>
</reference>
<sequence length="330" mass="37386">MSIEIRNINKQFGQFRALNEINLSIHSGELVALLGPSGCGKTTLLRIIAGLEQPDSGSIIFHGQDVSVHDVRKRNVGFVFQHYALFRHMTVFDNVAFGLRMKPKNIRPSKSDIEKKVHELLNLVQLDWLGDRYPEQLSGGQRQRIALARALIVEPSILLLDEPFGALDAKVRKELRRWLSQLHEDIDLTSVFVTHDQEEAMEVADRIVLMNKGVIEQIGTPAEVYNHPASEFVYHFLGDSNRLKVAQTEETILFRPHEVSLSVQAQDGYQAVTVRDIRPLGALTRLSLKLGEQSELIEAEVAKDDVSLEGLQKGDVIQFKPKRYNHDWEI</sequence>
<evidence type="ECO:0000255" key="1">
    <source>
        <dbReference type="HAMAP-Rule" id="MF_01701"/>
    </source>
</evidence>
<protein>
    <recommendedName>
        <fullName evidence="1">Sulfate/thiosulfate import ATP-binding protein CysA</fullName>
        <ecNumber evidence="1">7.3.2.3</ecNumber>
    </recommendedName>
    <alternativeName>
        <fullName evidence="1">Sulfate-transporting ATPase</fullName>
    </alternativeName>
</protein>